<dbReference type="EC" id="3.6.4.-" evidence="1"/>
<dbReference type="EMBL" id="CR848038">
    <property type="protein sequence ID" value="CAH63845.1"/>
    <property type="molecule type" value="Genomic_DNA"/>
</dbReference>
<dbReference type="RefSeq" id="WP_011097036.1">
    <property type="nucleotide sequence ID" value="NC_004552.2"/>
</dbReference>
<dbReference type="SMR" id="Q5L686"/>
<dbReference type="KEGG" id="cab:CAB392"/>
<dbReference type="eggNOG" id="COG2255">
    <property type="taxonomic scope" value="Bacteria"/>
</dbReference>
<dbReference type="HOGENOM" id="CLU_055599_1_0_0"/>
<dbReference type="OrthoDB" id="9804478at2"/>
<dbReference type="Proteomes" id="UP000001012">
    <property type="component" value="Chromosome"/>
</dbReference>
<dbReference type="GO" id="GO:0005737">
    <property type="term" value="C:cytoplasm"/>
    <property type="evidence" value="ECO:0007669"/>
    <property type="project" value="UniProtKB-SubCell"/>
</dbReference>
<dbReference type="GO" id="GO:0048476">
    <property type="term" value="C:Holliday junction resolvase complex"/>
    <property type="evidence" value="ECO:0007669"/>
    <property type="project" value="UniProtKB-UniRule"/>
</dbReference>
<dbReference type="GO" id="GO:0005524">
    <property type="term" value="F:ATP binding"/>
    <property type="evidence" value="ECO:0007669"/>
    <property type="project" value="UniProtKB-UniRule"/>
</dbReference>
<dbReference type="GO" id="GO:0016887">
    <property type="term" value="F:ATP hydrolysis activity"/>
    <property type="evidence" value="ECO:0007669"/>
    <property type="project" value="InterPro"/>
</dbReference>
<dbReference type="GO" id="GO:0000400">
    <property type="term" value="F:four-way junction DNA binding"/>
    <property type="evidence" value="ECO:0007669"/>
    <property type="project" value="UniProtKB-UniRule"/>
</dbReference>
<dbReference type="GO" id="GO:0009378">
    <property type="term" value="F:four-way junction helicase activity"/>
    <property type="evidence" value="ECO:0007669"/>
    <property type="project" value="InterPro"/>
</dbReference>
<dbReference type="GO" id="GO:0006310">
    <property type="term" value="P:DNA recombination"/>
    <property type="evidence" value="ECO:0007669"/>
    <property type="project" value="UniProtKB-UniRule"/>
</dbReference>
<dbReference type="GO" id="GO:0006281">
    <property type="term" value="P:DNA repair"/>
    <property type="evidence" value="ECO:0007669"/>
    <property type="project" value="UniProtKB-UniRule"/>
</dbReference>
<dbReference type="CDD" id="cd00009">
    <property type="entry name" value="AAA"/>
    <property type="match status" value="1"/>
</dbReference>
<dbReference type="Gene3D" id="1.10.8.60">
    <property type="match status" value="1"/>
</dbReference>
<dbReference type="Gene3D" id="3.40.50.300">
    <property type="entry name" value="P-loop containing nucleotide triphosphate hydrolases"/>
    <property type="match status" value="1"/>
</dbReference>
<dbReference type="Gene3D" id="1.10.10.10">
    <property type="entry name" value="Winged helix-like DNA-binding domain superfamily/Winged helix DNA-binding domain"/>
    <property type="match status" value="1"/>
</dbReference>
<dbReference type="HAMAP" id="MF_00016">
    <property type="entry name" value="DNA_HJ_migration_RuvB"/>
    <property type="match status" value="1"/>
</dbReference>
<dbReference type="InterPro" id="IPR003593">
    <property type="entry name" value="AAA+_ATPase"/>
</dbReference>
<dbReference type="InterPro" id="IPR041445">
    <property type="entry name" value="AAA_lid_4"/>
</dbReference>
<dbReference type="InterPro" id="IPR004605">
    <property type="entry name" value="DNA_helicase_Holl-junc_RuvB"/>
</dbReference>
<dbReference type="InterPro" id="IPR027417">
    <property type="entry name" value="P-loop_NTPase"/>
</dbReference>
<dbReference type="InterPro" id="IPR008824">
    <property type="entry name" value="RuvB-like_N"/>
</dbReference>
<dbReference type="InterPro" id="IPR008823">
    <property type="entry name" value="RuvB_C"/>
</dbReference>
<dbReference type="InterPro" id="IPR036388">
    <property type="entry name" value="WH-like_DNA-bd_sf"/>
</dbReference>
<dbReference type="InterPro" id="IPR036390">
    <property type="entry name" value="WH_DNA-bd_sf"/>
</dbReference>
<dbReference type="NCBIfam" id="NF000868">
    <property type="entry name" value="PRK00080.1"/>
    <property type="match status" value="1"/>
</dbReference>
<dbReference type="NCBIfam" id="TIGR00635">
    <property type="entry name" value="ruvB"/>
    <property type="match status" value="1"/>
</dbReference>
<dbReference type="PANTHER" id="PTHR42848">
    <property type="match status" value="1"/>
</dbReference>
<dbReference type="PANTHER" id="PTHR42848:SF1">
    <property type="entry name" value="HOLLIDAY JUNCTION BRANCH MIGRATION COMPLEX SUBUNIT RUVB"/>
    <property type="match status" value="1"/>
</dbReference>
<dbReference type="Pfam" id="PF17864">
    <property type="entry name" value="AAA_lid_4"/>
    <property type="match status" value="1"/>
</dbReference>
<dbReference type="Pfam" id="PF05491">
    <property type="entry name" value="RuvB_C"/>
    <property type="match status" value="1"/>
</dbReference>
<dbReference type="Pfam" id="PF05496">
    <property type="entry name" value="RuvB_N"/>
    <property type="match status" value="1"/>
</dbReference>
<dbReference type="SMART" id="SM00382">
    <property type="entry name" value="AAA"/>
    <property type="match status" value="1"/>
</dbReference>
<dbReference type="SUPFAM" id="SSF52540">
    <property type="entry name" value="P-loop containing nucleoside triphosphate hydrolases"/>
    <property type="match status" value="1"/>
</dbReference>
<dbReference type="SUPFAM" id="SSF46785">
    <property type="entry name" value="Winged helix' DNA-binding domain"/>
    <property type="match status" value="1"/>
</dbReference>
<comment type="function">
    <text evidence="1">The RuvA-RuvB-RuvC complex processes Holliday junction (HJ) DNA during genetic recombination and DNA repair, while the RuvA-RuvB complex plays an important role in the rescue of blocked DNA replication forks via replication fork reversal (RFR). RuvA specifically binds to HJ cruciform DNA, conferring on it an open structure. The RuvB hexamer acts as an ATP-dependent pump, pulling dsDNA into and through the RuvAB complex. RuvB forms 2 homohexamers on either side of HJ DNA bound by 1 or 2 RuvA tetramers; 4 subunits per hexamer contact DNA at a time. Coordinated motions by a converter formed by DNA-disengaged RuvB subunits stimulates ATP hydrolysis and nucleotide exchange. Immobilization of the converter enables RuvB to convert the ATP-contained energy into a lever motion, pulling 2 nucleotides of DNA out of the RuvA tetramer per ATP hydrolyzed, thus driving DNA branch migration. The RuvB motors rotate together with the DNA substrate, which together with the progressing nucleotide cycle form the mechanistic basis for DNA recombination by continuous HJ branch migration. Branch migration allows RuvC to scan DNA until it finds its consensus sequence, where it cleaves and resolves cruciform DNA.</text>
</comment>
<comment type="catalytic activity">
    <reaction evidence="1">
        <text>ATP + H2O = ADP + phosphate + H(+)</text>
        <dbReference type="Rhea" id="RHEA:13065"/>
        <dbReference type="ChEBI" id="CHEBI:15377"/>
        <dbReference type="ChEBI" id="CHEBI:15378"/>
        <dbReference type="ChEBI" id="CHEBI:30616"/>
        <dbReference type="ChEBI" id="CHEBI:43474"/>
        <dbReference type="ChEBI" id="CHEBI:456216"/>
    </reaction>
</comment>
<comment type="subunit">
    <text evidence="1">Homohexamer. Forms an RuvA(8)-RuvB(12)-Holliday junction (HJ) complex. HJ DNA is sandwiched between 2 RuvA tetramers; dsDNA enters through RuvA and exits via RuvB. An RuvB hexamer assembles on each DNA strand where it exits the tetramer. Each RuvB hexamer is contacted by two RuvA subunits (via domain III) on 2 adjacent RuvB subunits; this complex drives branch migration. In the full resolvosome a probable DNA-RuvA(4)-RuvB(12)-RuvC(2) complex forms which resolves the HJ.</text>
</comment>
<comment type="subcellular location">
    <subcellularLocation>
        <location evidence="1">Cytoplasm</location>
    </subcellularLocation>
</comment>
<comment type="domain">
    <text evidence="1">Has 3 domains, the large (RuvB-L) and small ATPase (RuvB-S) domains and the C-terminal head (RuvB-H) domain. The head domain binds DNA, while the ATPase domains jointly bind ATP, ADP or are empty depending on the state of the subunit in the translocation cycle. During a single DNA translocation step the structure of each domain remains the same, but their relative positions change.</text>
</comment>
<comment type="similarity">
    <text evidence="1">Belongs to the RuvB family.</text>
</comment>
<feature type="chain" id="PRO_0000235358" description="Holliday junction branch migration complex subunit RuvB">
    <location>
        <begin position="1"/>
        <end position="337"/>
    </location>
</feature>
<feature type="region of interest" description="Large ATPase domain (RuvB-L)" evidence="1">
    <location>
        <begin position="1"/>
        <end position="179"/>
    </location>
</feature>
<feature type="region of interest" description="Small ATPAse domain (RuvB-S)" evidence="1">
    <location>
        <begin position="180"/>
        <end position="250"/>
    </location>
</feature>
<feature type="region of interest" description="Head domain (RuvB-H)" evidence="1">
    <location>
        <begin position="253"/>
        <end position="337"/>
    </location>
</feature>
<feature type="binding site" evidence="1">
    <location>
        <position position="18"/>
    </location>
    <ligand>
        <name>ATP</name>
        <dbReference type="ChEBI" id="CHEBI:30616"/>
    </ligand>
</feature>
<feature type="binding site" evidence="1">
    <location>
        <position position="19"/>
    </location>
    <ligand>
        <name>ATP</name>
        <dbReference type="ChEBI" id="CHEBI:30616"/>
    </ligand>
</feature>
<feature type="binding site" evidence="1">
    <location>
        <position position="60"/>
    </location>
    <ligand>
        <name>ATP</name>
        <dbReference type="ChEBI" id="CHEBI:30616"/>
    </ligand>
</feature>
<feature type="binding site" evidence="1">
    <location>
        <position position="63"/>
    </location>
    <ligand>
        <name>ATP</name>
        <dbReference type="ChEBI" id="CHEBI:30616"/>
    </ligand>
</feature>
<feature type="binding site" evidence="1">
    <location>
        <position position="64"/>
    </location>
    <ligand>
        <name>ATP</name>
        <dbReference type="ChEBI" id="CHEBI:30616"/>
    </ligand>
</feature>
<feature type="binding site" evidence="1">
    <location>
        <position position="64"/>
    </location>
    <ligand>
        <name>Mg(2+)</name>
        <dbReference type="ChEBI" id="CHEBI:18420"/>
    </ligand>
</feature>
<feature type="binding site" evidence="1">
    <location>
        <position position="65"/>
    </location>
    <ligand>
        <name>ATP</name>
        <dbReference type="ChEBI" id="CHEBI:30616"/>
    </ligand>
</feature>
<feature type="binding site" evidence="1">
    <location>
        <begin position="126"/>
        <end position="128"/>
    </location>
    <ligand>
        <name>ATP</name>
        <dbReference type="ChEBI" id="CHEBI:30616"/>
    </ligand>
</feature>
<feature type="binding site" evidence="1">
    <location>
        <position position="169"/>
    </location>
    <ligand>
        <name>ATP</name>
        <dbReference type="ChEBI" id="CHEBI:30616"/>
    </ligand>
</feature>
<feature type="binding site" evidence="1">
    <location>
        <position position="179"/>
    </location>
    <ligand>
        <name>ATP</name>
        <dbReference type="ChEBI" id="CHEBI:30616"/>
    </ligand>
</feature>
<feature type="binding site" evidence="1">
    <location>
        <position position="216"/>
    </location>
    <ligand>
        <name>ATP</name>
        <dbReference type="ChEBI" id="CHEBI:30616"/>
    </ligand>
</feature>
<feature type="binding site" evidence="1">
    <location>
        <position position="308"/>
    </location>
    <ligand>
        <name>DNA</name>
        <dbReference type="ChEBI" id="CHEBI:16991"/>
    </ligand>
</feature>
<feature type="binding site" evidence="1">
    <location>
        <position position="313"/>
    </location>
    <ligand>
        <name>DNA</name>
        <dbReference type="ChEBI" id="CHEBI:16991"/>
    </ligand>
</feature>
<accession>Q5L686</accession>
<protein>
    <recommendedName>
        <fullName evidence="1">Holliday junction branch migration complex subunit RuvB</fullName>
        <ecNumber evidence="1">3.6.4.-</ecNumber>
    </recommendedName>
</protein>
<name>RUVB_CHLAB</name>
<reference key="1">
    <citation type="journal article" date="2005" name="Genome Res.">
        <title>The Chlamydophila abortus genome sequence reveals an array of variable proteins that contribute to interspecies variation.</title>
        <authorList>
            <person name="Thomson N.R."/>
            <person name="Yeats C."/>
            <person name="Bell K."/>
            <person name="Holden M.T.G."/>
            <person name="Bentley S.D."/>
            <person name="Livingstone M."/>
            <person name="Cerdeno-Tarraga A.-M."/>
            <person name="Harris B."/>
            <person name="Doggett J."/>
            <person name="Ormond D."/>
            <person name="Mungall K."/>
            <person name="Clarke K."/>
            <person name="Feltwell T."/>
            <person name="Hance Z."/>
            <person name="Sanders M."/>
            <person name="Quail M.A."/>
            <person name="Price C."/>
            <person name="Barrell B.G."/>
            <person name="Parkhill J."/>
            <person name="Longbottom D."/>
        </authorList>
    </citation>
    <scope>NUCLEOTIDE SEQUENCE [LARGE SCALE GENOMIC DNA]</scope>
    <source>
        <strain>DSM 27085 / S26/3</strain>
    </source>
</reference>
<sequence>MTHQVSVLHQDKKFDVSLRPKGLKEFCGQAQLTERLELFLNAAIQRGEVPGHCLFFGPPGLGKTSLAHIVANTVGKGLLVASGPQLVKPSDLLGLLTSLQEGDVFFIDEIHRMGKVAEEYLYSAMEDYKIDITIDSGPGARSVSVDLAPFSLVGATTRSGMLSEPLRARFSFTGRVAYYSDEDLATILRRSSNLLGIDADASALYEIARRSRGTPRLANNLLRWVRDFAQMREGNCINSDVAEKALAMLLIDEWGLNEIDIKLLTTIMNYYQGGPVGIKTLSVAVGEDVRTLEDVYEPFLILKGLLKKTSRGRMVTQLAYNHLKRCSDNLQSLGEEK</sequence>
<keyword id="KW-0067">ATP-binding</keyword>
<keyword id="KW-0963">Cytoplasm</keyword>
<keyword id="KW-0227">DNA damage</keyword>
<keyword id="KW-0233">DNA recombination</keyword>
<keyword id="KW-0234">DNA repair</keyword>
<keyword id="KW-0238">DNA-binding</keyword>
<keyword id="KW-0378">Hydrolase</keyword>
<keyword id="KW-0547">Nucleotide-binding</keyword>
<evidence type="ECO:0000255" key="1">
    <source>
        <dbReference type="HAMAP-Rule" id="MF_00016"/>
    </source>
</evidence>
<proteinExistence type="inferred from homology"/>
<gene>
    <name evidence="1" type="primary">ruvB</name>
    <name type="ordered locus">CAB392</name>
</gene>
<organism>
    <name type="scientific">Chlamydia abortus (strain DSM 27085 / S26/3)</name>
    <name type="common">Chlamydophila abortus</name>
    <dbReference type="NCBI Taxonomy" id="218497"/>
    <lineage>
        <taxon>Bacteria</taxon>
        <taxon>Pseudomonadati</taxon>
        <taxon>Chlamydiota</taxon>
        <taxon>Chlamydiia</taxon>
        <taxon>Chlamydiales</taxon>
        <taxon>Chlamydiaceae</taxon>
        <taxon>Chlamydia/Chlamydophila group</taxon>
        <taxon>Chlamydia</taxon>
    </lineage>
</organism>